<dbReference type="EMBL" id="CU329671">
    <property type="protein sequence ID" value="CAA16849.2"/>
    <property type="molecule type" value="Genomic_DNA"/>
</dbReference>
<dbReference type="PIR" id="T39880">
    <property type="entry name" value="T39880"/>
</dbReference>
<dbReference type="RefSeq" id="NP_596373.1">
    <property type="nucleotide sequence ID" value="NM_001022294.2"/>
</dbReference>
<dbReference type="PDB" id="3SWN">
    <property type="method" value="X-ray"/>
    <property type="resolution" value="2.50 A"/>
    <property type="chains" value="A/D/P/S=1-80"/>
</dbReference>
<dbReference type="PDB" id="4EMK">
    <property type="method" value="X-ray"/>
    <property type="resolution" value="2.30 A"/>
    <property type="chains" value="A=1-80"/>
</dbReference>
<dbReference type="PDB" id="6PPN">
    <property type="method" value="X-ray"/>
    <property type="resolution" value="1.91 A"/>
    <property type="chains" value="E/M=1-80"/>
</dbReference>
<dbReference type="PDB" id="6PPP">
    <property type="method" value="X-ray"/>
    <property type="resolution" value="2.33 A"/>
    <property type="chains" value="E/M=1-80"/>
</dbReference>
<dbReference type="PDB" id="6PPQ">
    <property type="method" value="X-ray"/>
    <property type="resolution" value="1.81 A"/>
    <property type="chains" value="E=1-80"/>
</dbReference>
<dbReference type="PDB" id="6PPV">
    <property type="method" value="X-ray"/>
    <property type="resolution" value="2.05 A"/>
    <property type="chains" value="E=1-80"/>
</dbReference>
<dbReference type="PDBsum" id="3SWN"/>
<dbReference type="PDBsum" id="4EMK"/>
<dbReference type="PDBsum" id="6PPN"/>
<dbReference type="PDBsum" id="6PPP"/>
<dbReference type="PDBsum" id="6PPQ"/>
<dbReference type="PDBsum" id="6PPV"/>
<dbReference type="SMR" id="O42978"/>
<dbReference type="BioGRID" id="277246">
    <property type="interactions" value="9"/>
</dbReference>
<dbReference type="FunCoup" id="O42978">
    <property type="interactions" value="311"/>
</dbReference>
<dbReference type="STRING" id="284812.O42978"/>
<dbReference type="PaxDb" id="4896-SPBC20F10.09.1"/>
<dbReference type="EnsemblFungi" id="SPBC20F10.09.1">
    <property type="protein sequence ID" value="SPBC20F10.09.1:pep"/>
    <property type="gene ID" value="SPBC20F10.09"/>
</dbReference>
<dbReference type="GeneID" id="2540723"/>
<dbReference type="KEGG" id="spo:2540723"/>
<dbReference type="PomBase" id="SPBC20F10.09">
    <property type="gene designation" value="lsm5"/>
</dbReference>
<dbReference type="VEuPathDB" id="FungiDB:SPBC20F10.09"/>
<dbReference type="eggNOG" id="KOG1775">
    <property type="taxonomic scope" value="Eukaryota"/>
</dbReference>
<dbReference type="HOGENOM" id="CLU_076902_6_0_1"/>
<dbReference type="InParanoid" id="O42978"/>
<dbReference type="OMA" id="NNICTLI"/>
<dbReference type="PhylomeDB" id="O42978"/>
<dbReference type="Reactome" id="R-SPO-430039">
    <property type="pathway name" value="mRNA decay by 5' to 3' exoribonuclease"/>
</dbReference>
<dbReference type="EvolutionaryTrace" id="O42978"/>
<dbReference type="PRO" id="PR:O42978"/>
<dbReference type="Proteomes" id="UP000002485">
    <property type="component" value="Chromosome II"/>
</dbReference>
<dbReference type="GO" id="GO:1990726">
    <property type="term" value="C:Lsm1-7-Pat1 complex"/>
    <property type="evidence" value="ECO:0000269"/>
    <property type="project" value="PomBase"/>
</dbReference>
<dbReference type="GO" id="GO:0120115">
    <property type="term" value="C:Lsm2-8 complex"/>
    <property type="evidence" value="ECO:0000269"/>
    <property type="project" value="PomBase"/>
</dbReference>
<dbReference type="GO" id="GO:0005730">
    <property type="term" value="C:nucleolus"/>
    <property type="evidence" value="ECO:0000250"/>
    <property type="project" value="PomBase"/>
</dbReference>
<dbReference type="GO" id="GO:0005634">
    <property type="term" value="C:nucleus"/>
    <property type="evidence" value="ECO:0007005"/>
    <property type="project" value="PomBase"/>
</dbReference>
<dbReference type="GO" id="GO:0005732">
    <property type="term" value="C:sno(s)RNA-containing ribonucleoprotein complex"/>
    <property type="evidence" value="ECO:0000250"/>
    <property type="project" value="PomBase"/>
</dbReference>
<dbReference type="GO" id="GO:0005681">
    <property type="term" value="C:spliceosomal complex"/>
    <property type="evidence" value="ECO:0007669"/>
    <property type="project" value="UniProtKB-KW"/>
</dbReference>
<dbReference type="GO" id="GO:0005697">
    <property type="term" value="C:telomerase holoenzyme complex"/>
    <property type="evidence" value="ECO:0000269"/>
    <property type="project" value="PomBase"/>
</dbReference>
<dbReference type="GO" id="GO:0005686">
    <property type="term" value="C:U2 snRNP"/>
    <property type="evidence" value="ECO:0000269"/>
    <property type="project" value="PomBase"/>
</dbReference>
<dbReference type="GO" id="GO:0046540">
    <property type="term" value="C:U4/U6 x U5 tri-snRNP complex"/>
    <property type="evidence" value="ECO:0000318"/>
    <property type="project" value="GO_Central"/>
</dbReference>
<dbReference type="GO" id="GO:0005682">
    <property type="term" value="C:U5 snRNP"/>
    <property type="evidence" value="ECO:0000314"/>
    <property type="project" value="PomBase"/>
</dbReference>
<dbReference type="GO" id="GO:0005688">
    <property type="term" value="C:U6 snRNP"/>
    <property type="evidence" value="ECO:0000269"/>
    <property type="project" value="PomBase"/>
</dbReference>
<dbReference type="GO" id="GO:0008266">
    <property type="term" value="F:poly(U) RNA binding"/>
    <property type="evidence" value="ECO:0000314"/>
    <property type="project" value="PomBase"/>
</dbReference>
<dbReference type="GO" id="GO:0030620">
    <property type="term" value="F:U2 snRNA binding"/>
    <property type="evidence" value="ECO:0000314"/>
    <property type="project" value="PomBase"/>
</dbReference>
<dbReference type="GO" id="GO:0000398">
    <property type="term" value="P:mRNA splicing, via spliceosome"/>
    <property type="evidence" value="ECO:0000318"/>
    <property type="project" value="GO_Central"/>
</dbReference>
<dbReference type="GO" id="GO:0006364">
    <property type="term" value="P:rRNA processing"/>
    <property type="evidence" value="ECO:0007669"/>
    <property type="project" value="UniProtKB-KW"/>
</dbReference>
<dbReference type="GO" id="GO:1905323">
    <property type="term" value="P:telomerase holoenzyme complex assembly"/>
    <property type="evidence" value="ECO:0000304"/>
    <property type="project" value="PomBase"/>
</dbReference>
<dbReference type="GO" id="GO:0008033">
    <property type="term" value="P:tRNA processing"/>
    <property type="evidence" value="ECO:0007669"/>
    <property type="project" value="UniProtKB-KW"/>
</dbReference>
<dbReference type="CDD" id="cd01732">
    <property type="entry name" value="LSm5"/>
    <property type="match status" value="1"/>
</dbReference>
<dbReference type="FunFam" id="2.30.30.100:FF:000067">
    <property type="entry name" value="U6 snRNA-associated Sm-like protein LSm5"/>
    <property type="match status" value="1"/>
</dbReference>
<dbReference type="Gene3D" id="2.30.30.100">
    <property type="match status" value="1"/>
</dbReference>
<dbReference type="InterPro" id="IPR033871">
    <property type="entry name" value="LSm5"/>
</dbReference>
<dbReference type="InterPro" id="IPR010920">
    <property type="entry name" value="LSM_dom_sf"/>
</dbReference>
<dbReference type="InterPro" id="IPR047575">
    <property type="entry name" value="Sm"/>
</dbReference>
<dbReference type="InterPro" id="IPR001163">
    <property type="entry name" value="Sm_dom_euk/arc"/>
</dbReference>
<dbReference type="PANTHER" id="PTHR20971">
    <property type="entry name" value="U6 SNRNA-ASSOCIATED PROTEIN"/>
    <property type="match status" value="1"/>
</dbReference>
<dbReference type="PANTHER" id="PTHR20971:SF0">
    <property type="entry name" value="U6 SNRNA-ASSOCIATED SM-LIKE PROTEIN LSM5"/>
    <property type="match status" value="1"/>
</dbReference>
<dbReference type="Pfam" id="PF01423">
    <property type="entry name" value="LSM"/>
    <property type="match status" value="1"/>
</dbReference>
<dbReference type="SMART" id="SM00651">
    <property type="entry name" value="Sm"/>
    <property type="match status" value="1"/>
</dbReference>
<dbReference type="SUPFAM" id="SSF50182">
    <property type="entry name" value="Sm-like ribonucleoproteins"/>
    <property type="match status" value="1"/>
</dbReference>
<dbReference type="PROSITE" id="PS52002">
    <property type="entry name" value="SM"/>
    <property type="match status" value="1"/>
</dbReference>
<reference key="1">
    <citation type="journal article" date="2002" name="Nature">
        <title>The genome sequence of Schizosaccharomyces pombe.</title>
        <authorList>
            <person name="Wood V."/>
            <person name="Gwilliam R."/>
            <person name="Rajandream M.A."/>
            <person name="Lyne M.H."/>
            <person name="Lyne R."/>
            <person name="Stewart A."/>
            <person name="Sgouros J.G."/>
            <person name="Peat N."/>
            <person name="Hayles J."/>
            <person name="Baker S.G."/>
            <person name="Basham D."/>
            <person name="Bowman S."/>
            <person name="Brooks K."/>
            <person name="Brown D."/>
            <person name="Brown S."/>
            <person name="Chillingworth T."/>
            <person name="Churcher C.M."/>
            <person name="Collins M."/>
            <person name="Connor R."/>
            <person name="Cronin A."/>
            <person name="Davis P."/>
            <person name="Feltwell T."/>
            <person name="Fraser A."/>
            <person name="Gentles S."/>
            <person name="Goble A."/>
            <person name="Hamlin N."/>
            <person name="Harris D.E."/>
            <person name="Hidalgo J."/>
            <person name="Hodgson G."/>
            <person name="Holroyd S."/>
            <person name="Hornsby T."/>
            <person name="Howarth S."/>
            <person name="Huckle E.J."/>
            <person name="Hunt S."/>
            <person name="Jagels K."/>
            <person name="James K.D."/>
            <person name="Jones L."/>
            <person name="Jones M."/>
            <person name="Leather S."/>
            <person name="McDonald S."/>
            <person name="McLean J."/>
            <person name="Mooney P."/>
            <person name="Moule S."/>
            <person name="Mungall K.L."/>
            <person name="Murphy L.D."/>
            <person name="Niblett D."/>
            <person name="Odell C."/>
            <person name="Oliver K."/>
            <person name="O'Neil S."/>
            <person name="Pearson D."/>
            <person name="Quail M.A."/>
            <person name="Rabbinowitsch E."/>
            <person name="Rutherford K.M."/>
            <person name="Rutter S."/>
            <person name="Saunders D."/>
            <person name="Seeger K."/>
            <person name="Sharp S."/>
            <person name="Skelton J."/>
            <person name="Simmonds M.N."/>
            <person name="Squares R."/>
            <person name="Squares S."/>
            <person name="Stevens K."/>
            <person name="Taylor K."/>
            <person name="Taylor R.G."/>
            <person name="Tivey A."/>
            <person name="Walsh S.V."/>
            <person name="Warren T."/>
            <person name="Whitehead S."/>
            <person name="Woodward J.R."/>
            <person name="Volckaert G."/>
            <person name="Aert R."/>
            <person name="Robben J."/>
            <person name="Grymonprez B."/>
            <person name="Weltjens I."/>
            <person name="Vanstreels E."/>
            <person name="Rieger M."/>
            <person name="Schaefer M."/>
            <person name="Mueller-Auer S."/>
            <person name="Gabel C."/>
            <person name="Fuchs M."/>
            <person name="Duesterhoeft A."/>
            <person name="Fritzc C."/>
            <person name="Holzer E."/>
            <person name="Moestl D."/>
            <person name="Hilbert H."/>
            <person name="Borzym K."/>
            <person name="Langer I."/>
            <person name="Beck A."/>
            <person name="Lehrach H."/>
            <person name="Reinhardt R."/>
            <person name="Pohl T.M."/>
            <person name="Eger P."/>
            <person name="Zimmermann W."/>
            <person name="Wedler H."/>
            <person name="Wambutt R."/>
            <person name="Purnelle B."/>
            <person name="Goffeau A."/>
            <person name="Cadieu E."/>
            <person name="Dreano S."/>
            <person name="Gloux S."/>
            <person name="Lelaure V."/>
            <person name="Mottier S."/>
            <person name="Galibert F."/>
            <person name="Aves S.J."/>
            <person name="Xiang Z."/>
            <person name="Hunt C."/>
            <person name="Moore K."/>
            <person name="Hurst S.M."/>
            <person name="Lucas M."/>
            <person name="Rochet M."/>
            <person name="Gaillardin C."/>
            <person name="Tallada V.A."/>
            <person name="Garzon A."/>
            <person name="Thode G."/>
            <person name="Daga R.R."/>
            <person name="Cruzado L."/>
            <person name="Jimenez J."/>
            <person name="Sanchez M."/>
            <person name="del Rey F."/>
            <person name="Benito J."/>
            <person name="Dominguez A."/>
            <person name="Revuelta J.L."/>
            <person name="Moreno S."/>
            <person name="Armstrong J."/>
            <person name="Forsburg S.L."/>
            <person name="Cerutti L."/>
            <person name="Lowe T."/>
            <person name="McCombie W.R."/>
            <person name="Paulsen I."/>
            <person name="Potashkin J."/>
            <person name="Shpakovski G.V."/>
            <person name="Ussery D."/>
            <person name="Barrell B.G."/>
            <person name="Nurse P."/>
        </authorList>
    </citation>
    <scope>NUCLEOTIDE SEQUENCE [LARGE SCALE GENOMIC DNA]</scope>
    <source>
        <strain>972 / ATCC 24843</strain>
    </source>
</reference>
<reference key="2">
    <citation type="journal article" date="2006" name="Nat. Biotechnol.">
        <title>ORFeome cloning and global analysis of protein localization in the fission yeast Schizosaccharomyces pombe.</title>
        <authorList>
            <person name="Matsuyama A."/>
            <person name="Arai R."/>
            <person name="Yashiroda Y."/>
            <person name="Shirai A."/>
            <person name="Kamata A."/>
            <person name="Sekido S."/>
            <person name="Kobayashi Y."/>
            <person name="Hashimoto A."/>
            <person name="Hamamoto M."/>
            <person name="Hiraoka Y."/>
            <person name="Horinouchi S."/>
            <person name="Yoshida M."/>
        </authorList>
    </citation>
    <scope>SUBCELLULAR LOCATION [LARGE SCALE ANALYSIS]</scope>
</reference>
<reference evidence="10" key="3">
    <citation type="journal article" date="2011" name="J. Mol. Biol.">
        <title>Structure of the LSm657 complex: an assembly intermediate of the LSm1-7 and LSm2-8 rings.</title>
        <authorList>
            <person name="Mund M."/>
            <person name="Neu A."/>
            <person name="Ullmann J."/>
            <person name="Neu U."/>
            <person name="Sprangers R."/>
        </authorList>
    </citation>
    <scope>X-RAY CRYSTALLOGRAPHY (2.50 ANGSTROMS)</scope>
    <scope>SUBUNIT</scope>
    <scope>IDENTIFICATION IN THE LSM1-LSM7 AND LSM2-LSM8 COMPLEXES</scope>
</reference>
<reference evidence="11" key="4">
    <citation type="journal article" date="2012" name="PLoS ONE">
        <title>Crystal structures of Lsm3, Lsm4 and Lsm5/6/7 from Schizosaccharomyces pombe.</title>
        <authorList>
            <person name="Wu D."/>
            <person name="Jiang S."/>
            <person name="Bowler M.W."/>
            <person name="Song H."/>
        </authorList>
    </citation>
    <scope>X-RAY CRYSTALLOGRAPHY (2.30 ANGSTROMS)</scope>
    <scope>FUNCTION</scope>
    <scope>SUBUNIT</scope>
    <scope>IDENTIFICATION IN THE LSM1-LSM7 AND LSM2-LSM8 COMPLEXES</scope>
</reference>
<reference evidence="12 13 14 15" key="5">
    <citation type="journal article" date="2020" name="RNA">
        <title>Molecular basis for the distinct cellular functions of the Lsm1-7 and Lsm2-8 complexes.</title>
        <authorList>
            <person name="Montemayor E.J."/>
            <person name="Virta J.M."/>
            <person name="Hayes S.M."/>
            <person name="Nomura Y."/>
            <person name="Brow D.A."/>
            <person name="Butcher S.E."/>
        </authorList>
    </citation>
    <scope>X-RAY CRYSTALLOGRAPHY (1.81 ANGSTROMS) IN COMPLEX WITH RNA</scope>
    <scope>FUNCTION</scope>
    <scope>SUBUNIT</scope>
    <scope>IDENTIFICATION IN THE LSM1-LSM7 AND LSM2-LSM8 COMPLEXES</scope>
    <scope>MUTAGENESIS OF 66-ASN--ASN-68</scope>
</reference>
<organism>
    <name type="scientific">Schizosaccharomyces pombe (strain 972 / ATCC 24843)</name>
    <name type="common">Fission yeast</name>
    <dbReference type="NCBI Taxonomy" id="284812"/>
    <lineage>
        <taxon>Eukaryota</taxon>
        <taxon>Fungi</taxon>
        <taxon>Dikarya</taxon>
        <taxon>Ascomycota</taxon>
        <taxon>Taphrinomycotina</taxon>
        <taxon>Schizosaccharomycetes</taxon>
        <taxon>Schizosaccharomycetales</taxon>
        <taxon>Schizosaccharomycetaceae</taxon>
        <taxon>Schizosaccharomyces</taxon>
    </lineage>
</organism>
<accession>O42978</accession>
<sequence length="80" mass="8853">MSMTILPLELIDKCIGSNLWVIMKSEREFAGTLVGFDDYVNIVLKDVTEYDTVTGVTEKHSEMLLNGNGMCMLIPGGKPE</sequence>
<feature type="chain" id="PRO_0000317307" description="LSM complex subunit lsm5">
    <location>
        <begin position="1"/>
        <end position="80"/>
    </location>
</feature>
<feature type="domain" description="Sm" evidence="2">
    <location>
        <begin position="6"/>
        <end position="79"/>
    </location>
</feature>
<feature type="mutagenesis site" description="Mildly impairs RNA-binding." evidence="6">
    <original>NGN</original>
    <variation>AGA</variation>
    <location>
        <begin position="66"/>
        <end position="68"/>
    </location>
</feature>
<feature type="helix" evidence="16">
    <location>
        <begin position="7"/>
        <end position="13"/>
    </location>
</feature>
<feature type="turn" evidence="16">
    <location>
        <begin position="14"/>
        <end position="16"/>
    </location>
</feature>
<feature type="strand" evidence="16">
    <location>
        <begin position="17"/>
        <end position="36"/>
    </location>
</feature>
<feature type="strand" evidence="16">
    <location>
        <begin position="42"/>
        <end position="51"/>
    </location>
</feature>
<feature type="turn" evidence="16">
    <location>
        <begin position="52"/>
        <end position="54"/>
    </location>
</feature>
<feature type="strand" evidence="16">
    <location>
        <begin position="57"/>
        <end position="65"/>
    </location>
</feature>
<feature type="helix" evidence="16">
    <location>
        <begin position="67"/>
        <end position="69"/>
    </location>
</feature>
<feature type="strand" evidence="16">
    <location>
        <begin position="70"/>
        <end position="75"/>
    </location>
</feature>
<proteinExistence type="evidence at protein level"/>
<keyword id="KW-0002">3D-structure</keyword>
<keyword id="KW-0507">mRNA processing</keyword>
<keyword id="KW-0508">mRNA splicing</keyword>
<keyword id="KW-0539">Nucleus</keyword>
<keyword id="KW-1185">Reference proteome</keyword>
<keyword id="KW-0687">Ribonucleoprotein</keyword>
<keyword id="KW-0694">RNA-binding</keyword>
<keyword id="KW-0698">rRNA processing</keyword>
<keyword id="KW-0747">Spliceosome</keyword>
<keyword id="KW-0819">tRNA processing</keyword>
<protein>
    <recommendedName>
        <fullName evidence="7">LSM complex subunit lsm5</fullName>
    </recommendedName>
</protein>
<name>LSM5_SCHPO</name>
<gene>
    <name type="primary">lsm5</name>
    <name type="ORF">SPBC20F10.09</name>
</gene>
<evidence type="ECO:0000250" key="1">
    <source>
        <dbReference type="UniProtKB" id="P40089"/>
    </source>
</evidence>
<evidence type="ECO:0000255" key="2">
    <source>
        <dbReference type="PROSITE-ProRule" id="PRU01346"/>
    </source>
</evidence>
<evidence type="ECO:0000269" key="3">
    <source>
    </source>
</evidence>
<evidence type="ECO:0000269" key="4">
    <source>
    </source>
</evidence>
<evidence type="ECO:0000269" key="5">
    <source>
    </source>
</evidence>
<evidence type="ECO:0000269" key="6">
    <source>
    </source>
</evidence>
<evidence type="ECO:0000305" key="7"/>
<evidence type="ECO:0000305" key="8">
    <source>
    </source>
</evidence>
<evidence type="ECO:0000305" key="9">
    <source>
    </source>
</evidence>
<evidence type="ECO:0007744" key="10">
    <source>
        <dbReference type="PDB" id="3SWN"/>
    </source>
</evidence>
<evidence type="ECO:0007744" key="11">
    <source>
        <dbReference type="PDB" id="4EMK"/>
    </source>
</evidence>
<evidence type="ECO:0007744" key="12">
    <source>
        <dbReference type="PDB" id="6PPN"/>
    </source>
</evidence>
<evidence type="ECO:0007744" key="13">
    <source>
        <dbReference type="PDB" id="6PPP"/>
    </source>
</evidence>
<evidence type="ECO:0007744" key="14">
    <source>
        <dbReference type="PDB" id="6PPQ"/>
    </source>
</evidence>
<evidence type="ECO:0007744" key="15">
    <source>
        <dbReference type="PDB" id="6PPV"/>
    </source>
</evidence>
<evidence type="ECO:0007829" key="16">
    <source>
        <dbReference type="PDB" id="6PPQ"/>
    </source>
</evidence>
<comment type="function">
    <text evidence="1 5 6">Component of LSm protein complexes, which are involved in RNA processing and may function in a chaperone-like manner (PubMed:22615807, PubMed:32518066). Component of the cytoplasmic LSM1-LSM7 complex which is involved in mRNA degradation by activating the decapping step (PubMed:32518066). The LSM1-LSM7 complex loads onto the 3'-end of single stranded RNA (PubMed:32518066). Component of the nuclear LSM2-LSM8 complex, which is involved in spliceosome assembly (PubMed:32518066). The LSM2-LSM8 complex plays a role in the biogenesis of the spliceosomal U4/U6-U5 tri-snRNP complex by accelerating prp24-mediated annealing of U4/U6 di-snRNA (By similarity). The LSM2-LSM8 complex binds U6 snRNA terminating with a cyclic 2',3' phosphate group; RNA with an unmodified 3' hydroxyl or non-cyclic 3' phosphate is bound less tightly (PubMed:32518066).</text>
</comment>
<comment type="subunit">
    <text evidence="4 5 6 8 9">Component of the heptameric LSM1-LSM7 complex that forms a seven-membered ring structure with a donut shape (Probable) (PubMed:32518066). The LSm subunits are arranged in the order lsm1, lsm2, lsm3, lsm6, lsm5, lsm7 and lsm4 (PubMed:22001694, PubMed:22615807, PubMed:32518066). Component of the heptameric LSM2-LSM8 complex that forms a seven-membered ring structure with a donut shape (Probable) (PubMed:32518066). The LSm subunits are arranged in the order lsm8, lsm2, lsm3, lsm6, lsm5, lsm7 and lsm4 (PubMed:22001694, PubMed:22615807, PubMed:32518066).</text>
</comment>
<comment type="subcellular location">
    <subcellularLocation>
        <location evidence="3">Nucleus</location>
    </subcellularLocation>
</comment>
<comment type="similarity">
    <text evidence="7">Belongs to the snRNP Sm proteins family.</text>
</comment>